<sequence length="222" mass="24439">MIRFEHVSKAYLGGRQALQGVTFHMQPGEMAFLTGHSGAGKSTLLKLICGIERPSAGKIWFSGHDITRLKNREVPFLRRQIGMIFQDHHLLMDRTVYDNVAIPLIIAGASGDDIRRRVSAALDKVGLLDKAKNFPIQLSGGEQQRVGIARAVVNKPAVLLADEPTGNLDDALSEGILRLFEEFNRVGVTVLMATHDINLISRRSYRMLTLSDGHLHGGVGHE</sequence>
<protein>
    <recommendedName>
        <fullName>Cell division ATP-binding protein FtsE</fullName>
    </recommendedName>
</protein>
<feature type="chain" id="PRO_0000092329" description="Cell division ATP-binding protein FtsE">
    <location>
        <begin position="1"/>
        <end position="222"/>
    </location>
</feature>
<feature type="domain" description="ABC transporter" evidence="2">
    <location>
        <begin position="2"/>
        <end position="222"/>
    </location>
</feature>
<feature type="binding site" evidence="2">
    <location>
        <begin position="35"/>
        <end position="42"/>
    </location>
    <ligand>
        <name>ATP</name>
        <dbReference type="ChEBI" id="CHEBI:30616"/>
    </ligand>
</feature>
<accession>P0A9R9</accession>
<accession>P10115</accession>
<reference key="1">
    <citation type="journal article" date="2001" name="Nature">
        <title>Genome sequence of enterohaemorrhagic Escherichia coli O157:H7.</title>
        <authorList>
            <person name="Perna N.T."/>
            <person name="Plunkett G. III"/>
            <person name="Burland V."/>
            <person name="Mau B."/>
            <person name="Glasner J.D."/>
            <person name="Rose D.J."/>
            <person name="Mayhew G.F."/>
            <person name="Evans P.S."/>
            <person name="Gregor J."/>
            <person name="Kirkpatrick H.A."/>
            <person name="Posfai G."/>
            <person name="Hackett J."/>
            <person name="Klink S."/>
            <person name="Boutin A."/>
            <person name="Shao Y."/>
            <person name="Miller L."/>
            <person name="Grotbeck E.J."/>
            <person name="Davis N.W."/>
            <person name="Lim A."/>
            <person name="Dimalanta E.T."/>
            <person name="Potamousis K."/>
            <person name="Apodaca J."/>
            <person name="Anantharaman T.S."/>
            <person name="Lin J."/>
            <person name="Yen G."/>
            <person name="Schwartz D.C."/>
            <person name="Welch R.A."/>
            <person name="Blattner F.R."/>
        </authorList>
    </citation>
    <scope>NUCLEOTIDE SEQUENCE [LARGE SCALE GENOMIC DNA]</scope>
    <source>
        <strain>O157:H7 / EDL933 / ATCC 700927 / EHEC</strain>
    </source>
</reference>
<reference key="2">
    <citation type="journal article" date="2001" name="DNA Res.">
        <title>Complete genome sequence of enterohemorrhagic Escherichia coli O157:H7 and genomic comparison with a laboratory strain K-12.</title>
        <authorList>
            <person name="Hayashi T."/>
            <person name="Makino K."/>
            <person name="Ohnishi M."/>
            <person name="Kurokawa K."/>
            <person name="Ishii K."/>
            <person name="Yokoyama K."/>
            <person name="Han C.-G."/>
            <person name="Ohtsubo E."/>
            <person name="Nakayama K."/>
            <person name="Murata T."/>
            <person name="Tanaka M."/>
            <person name="Tobe T."/>
            <person name="Iida T."/>
            <person name="Takami H."/>
            <person name="Honda T."/>
            <person name="Sasakawa C."/>
            <person name="Ogasawara N."/>
            <person name="Yasunaga T."/>
            <person name="Kuhara S."/>
            <person name="Shiba T."/>
            <person name="Hattori M."/>
            <person name="Shinagawa H."/>
        </authorList>
    </citation>
    <scope>NUCLEOTIDE SEQUENCE [LARGE SCALE GENOMIC DNA]</scope>
    <source>
        <strain>O157:H7 / Sakai / RIMD 0509952 / EHEC</strain>
    </source>
</reference>
<keyword id="KW-0067">ATP-binding</keyword>
<keyword id="KW-0131">Cell cycle</keyword>
<keyword id="KW-0132">Cell division</keyword>
<keyword id="KW-0997">Cell inner membrane</keyword>
<keyword id="KW-1003">Cell membrane</keyword>
<keyword id="KW-0472">Membrane</keyword>
<keyword id="KW-0547">Nucleotide-binding</keyword>
<keyword id="KW-1185">Reference proteome</keyword>
<name>FTSE_ECO57</name>
<proteinExistence type="inferred from homology"/>
<comment type="function">
    <text evidence="1">Part of the ABC transporter FtsEX involved in cellular division. Important for assembly or stability of the septal ring.</text>
</comment>
<comment type="subunit">
    <text evidence="1">Homodimer. Forms a membrane-associated complex with FtsX.</text>
</comment>
<comment type="subcellular location">
    <subcellularLocation>
        <location evidence="1">Cell inner membrane</location>
        <topology evidence="1">Peripheral membrane protein</topology>
        <orientation evidence="1">Cytoplasmic side</orientation>
    </subcellularLocation>
    <text evidence="1">Associated with the membrane through an interaction with FtsX.</text>
</comment>
<comment type="similarity">
    <text evidence="3">Belongs to the ABC transporter superfamily.</text>
</comment>
<organism>
    <name type="scientific">Escherichia coli O157:H7</name>
    <dbReference type="NCBI Taxonomy" id="83334"/>
    <lineage>
        <taxon>Bacteria</taxon>
        <taxon>Pseudomonadati</taxon>
        <taxon>Pseudomonadota</taxon>
        <taxon>Gammaproteobacteria</taxon>
        <taxon>Enterobacterales</taxon>
        <taxon>Enterobacteriaceae</taxon>
        <taxon>Escherichia</taxon>
    </lineage>
</organism>
<dbReference type="EMBL" id="AE005174">
    <property type="protein sequence ID" value="AAG58572.1"/>
    <property type="molecule type" value="Genomic_DNA"/>
</dbReference>
<dbReference type="EMBL" id="BA000007">
    <property type="protein sequence ID" value="BAB37735.1"/>
    <property type="molecule type" value="Genomic_DNA"/>
</dbReference>
<dbReference type="PIR" id="H86013">
    <property type="entry name" value="H86013"/>
</dbReference>
<dbReference type="PIR" id="H91167">
    <property type="entry name" value="H91167"/>
</dbReference>
<dbReference type="RefSeq" id="NP_312339.1">
    <property type="nucleotide sequence ID" value="NC_002695.1"/>
</dbReference>
<dbReference type="RefSeq" id="WP_000617723.1">
    <property type="nucleotide sequence ID" value="NZ_VOAI01000004.1"/>
</dbReference>
<dbReference type="SMR" id="P0A9R9"/>
<dbReference type="STRING" id="155864.Z4837"/>
<dbReference type="GeneID" id="86862141"/>
<dbReference type="GeneID" id="915830"/>
<dbReference type="KEGG" id="ece:Z4837"/>
<dbReference type="KEGG" id="ecs:ECs_4312"/>
<dbReference type="PATRIC" id="fig|386585.9.peg.4505"/>
<dbReference type="eggNOG" id="COG2884">
    <property type="taxonomic scope" value="Bacteria"/>
</dbReference>
<dbReference type="HOGENOM" id="CLU_000604_1_22_6"/>
<dbReference type="OMA" id="EDFNQAG"/>
<dbReference type="Proteomes" id="UP000000558">
    <property type="component" value="Chromosome"/>
</dbReference>
<dbReference type="Proteomes" id="UP000002519">
    <property type="component" value="Chromosome"/>
</dbReference>
<dbReference type="GO" id="GO:0005886">
    <property type="term" value="C:plasma membrane"/>
    <property type="evidence" value="ECO:0007669"/>
    <property type="project" value="UniProtKB-SubCell"/>
</dbReference>
<dbReference type="GO" id="GO:0005524">
    <property type="term" value="F:ATP binding"/>
    <property type="evidence" value="ECO:0007669"/>
    <property type="project" value="UniProtKB-KW"/>
</dbReference>
<dbReference type="GO" id="GO:0016887">
    <property type="term" value="F:ATP hydrolysis activity"/>
    <property type="evidence" value="ECO:0007669"/>
    <property type="project" value="InterPro"/>
</dbReference>
<dbReference type="GO" id="GO:0022857">
    <property type="term" value="F:transmembrane transporter activity"/>
    <property type="evidence" value="ECO:0007669"/>
    <property type="project" value="TreeGrafter"/>
</dbReference>
<dbReference type="GO" id="GO:0051301">
    <property type="term" value="P:cell division"/>
    <property type="evidence" value="ECO:0007669"/>
    <property type="project" value="UniProtKB-KW"/>
</dbReference>
<dbReference type="FunFam" id="3.40.50.300:FF:000056">
    <property type="entry name" value="Cell division ATP-binding protein FtsE"/>
    <property type="match status" value="1"/>
</dbReference>
<dbReference type="Gene3D" id="3.40.50.300">
    <property type="entry name" value="P-loop containing nucleotide triphosphate hydrolases"/>
    <property type="match status" value="1"/>
</dbReference>
<dbReference type="InterPro" id="IPR003593">
    <property type="entry name" value="AAA+_ATPase"/>
</dbReference>
<dbReference type="InterPro" id="IPR003439">
    <property type="entry name" value="ABC_transporter-like_ATP-bd"/>
</dbReference>
<dbReference type="InterPro" id="IPR017871">
    <property type="entry name" value="ABC_transporter-like_CS"/>
</dbReference>
<dbReference type="InterPro" id="IPR015854">
    <property type="entry name" value="ABC_transpr_LolD-like"/>
</dbReference>
<dbReference type="InterPro" id="IPR005286">
    <property type="entry name" value="Cell_div_FtsE"/>
</dbReference>
<dbReference type="InterPro" id="IPR027417">
    <property type="entry name" value="P-loop_NTPase"/>
</dbReference>
<dbReference type="NCBIfam" id="TIGR02673">
    <property type="entry name" value="FtsE"/>
    <property type="match status" value="1"/>
</dbReference>
<dbReference type="PANTHER" id="PTHR24220:SF470">
    <property type="entry name" value="CELL DIVISION ATP-BINDING PROTEIN FTSE"/>
    <property type="match status" value="1"/>
</dbReference>
<dbReference type="PANTHER" id="PTHR24220">
    <property type="entry name" value="IMPORT ATP-BINDING PROTEIN"/>
    <property type="match status" value="1"/>
</dbReference>
<dbReference type="Pfam" id="PF00005">
    <property type="entry name" value="ABC_tran"/>
    <property type="match status" value="1"/>
</dbReference>
<dbReference type="SMART" id="SM00382">
    <property type="entry name" value="AAA"/>
    <property type="match status" value="1"/>
</dbReference>
<dbReference type="SUPFAM" id="SSF52540">
    <property type="entry name" value="P-loop containing nucleoside triphosphate hydrolases"/>
    <property type="match status" value="1"/>
</dbReference>
<dbReference type="PROSITE" id="PS00211">
    <property type="entry name" value="ABC_TRANSPORTER_1"/>
    <property type="match status" value="1"/>
</dbReference>
<dbReference type="PROSITE" id="PS50893">
    <property type="entry name" value="ABC_TRANSPORTER_2"/>
    <property type="match status" value="1"/>
</dbReference>
<gene>
    <name type="primary">ftsE</name>
    <name type="ordered locus">Z4837</name>
    <name type="ordered locus">ECs4312</name>
</gene>
<evidence type="ECO:0000250" key="1">
    <source>
        <dbReference type="UniProtKB" id="P0A9R7"/>
    </source>
</evidence>
<evidence type="ECO:0000255" key="2">
    <source>
        <dbReference type="PROSITE-ProRule" id="PRU00434"/>
    </source>
</evidence>
<evidence type="ECO:0000305" key="3"/>